<dbReference type="EMBL" id="CP000249">
    <property type="protein sequence ID" value="ABD12025.1"/>
    <property type="molecule type" value="Genomic_DNA"/>
</dbReference>
<dbReference type="RefSeq" id="WP_011437060.1">
    <property type="nucleotide sequence ID" value="NZ_MSEA01000276.1"/>
</dbReference>
<dbReference type="SMR" id="Q2J9L7"/>
<dbReference type="STRING" id="106370.Francci3_2663"/>
<dbReference type="KEGG" id="fra:Francci3_2663"/>
<dbReference type="eggNOG" id="COG0378">
    <property type="taxonomic scope" value="Bacteria"/>
</dbReference>
<dbReference type="HOGENOM" id="CLU_072144_1_0_11"/>
<dbReference type="OrthoDB" id="9802035at2"/>
<dbReference type="PhylomeDB" id="Q2J9L7"/>
<dbReference type="Proteomes" id="UP000001937">
    <property type="component" value="Chromosome"/>
</dbReference>
<dbReference type="GO" id="GO:0005737">
    <property type="term" value="C:cytoplasm"/>
    <property type="evidence" value="ECO:0007669"/>
    <property type="project" value="UniProtKB-SubCell"/>
</dbReference>
<dbReference type="GO" id="GO:0005525">
    <property type="term" value="F:GTP binding"/>
    <property type="evidence" value="ECO:0007669"/>
    <property type="project" value="UniProtKB-KW"/>
</dbReference>
<dbReference type="GO" id="GO:0003924">
    <property type="term" value="F:GTPase activity"/>
    <property type="evidence" value="ECO:0007669"/>
    <property type="project" value="InterPro"/>
</dbReference>
<dbReference type="GO" id="GO:0016151">
    <property type="term" value="F:nickel cation binding"/>
    <property type="evidence" value="ECO:0007669"/>
    <property type="project" value="UniProtKB-UniRule"/>
</dbReference>
<dbReference type="GO" id="GO:0043419">
    <property type="term" value="P:urea catabolic process"/>
    <property type="evidence" value="ECO:0007669"/>
    <property type="project" value="InterPro"/>
</dbReference>
<dbReference type="CDD" id="cd05540">
    <property type="entry name" value="UreG"/>
    <property type="match status" value="1"/>
</dbReference>
<dbReference type="Gene3D" id="3.40.50.300">
    <property type="entry name" value="P-loop containing nucleotide triphosphate hydrolases"/>
    <property type="match status" value="1"/>
</dbReference>
<dbReference type="HAMAP" id="MF_01389">
    <property type="entry name" value="UreG"/>
    <property type="match status" value="1"/>
</dbReference>
<dbReference type="InterPro" id="IPR003495">
    <property type="entry name" value="CobW/HypB/UreG_nucleotide-bd"/>
</dbReference>
<dbReference type="InterPro" id="IPR027417">
    <property type="entry name" value="P-loop_NTPase"/>
</dbReference>
<dbReference type="InterPro" id="IPR004400">
    <property type="entry name" value="UreG"/>
</dbReference>
<dbReference type="NCBIfam" id="TIGR00101">
    <property type="entry name" value="ureG"/>
    <property type="match status" value="1"/>
</dbReference>
<dbReference type="PANTHER" id="PTHR31715">
    <property type="entry name" value="UREASE ACCESSORY PROTEIN G"/>
    <property type="match status" value="1"/>
</dbReference>
<dbReference type="PANTHER" id="PTHR31715:SF0">
    <property type="entry name" value="UREASE ACCESSORY PROTEIN G"/>
    <property type="match status" value="1"/>
</dbReference>
<dbReference type="Pfam" id="PF02492">
    <property type="entry name" value="cobW"/>
    <property type="match status" value="1"/>
</dbReference>
<dbReference type="SUPFAM" id="SSF52540">
    <property type="entry name" value="P-loop containing nucleoside triphosphate hydrolases"/>
    <property type="match status" value="1"/>
</dbReference>
<sequence>MHLGHEEFQRTDGRASTGPADAGPAGAGRAPRIGVGGPVGSGKTALVAALCRALSSSLRIGVVTNDIYTTEDADFLRRAGVLDPERIRAVETGCCPHTAIRDDITANLDMVEDLEADTGPLDLVLVESGGDNLTATFSYGLIDRQIFVVDVAGGDKVPRKGGPGVTGSDLLVINKTDLAPLVGADLDVMARDATAARGARPVVFTSLTADPTAADVTAWVRAQLAELSPRGGSYDASDASNASQPLNRM</sequence>
<name>UREG_FRACC</name>
<protein>
    <recommendedName>
        <fullName evidence="1">Urease accessory protein UreG</fullName>
    </recommendedName>
</protein>
<evidence type="ECO:0000255" key="1">
    <source>
        <dbReference type="HAMAP-Rule" id="MF_01389"/>
    </source>
</evidence>
<evidence type="ECO:0000256" key="2">
    <source>
        <dbReference type="SAM" id="MobiDB-lite"/>
    </source>
</evidence>
<feature type="chain" id="PRO_0000347392" description="Urease accessory protein UreG">
    <location>
        <begin position="1"/>
        <end position="249"/>
    </location>
</feature>
<feature type="region of interest" description="Disordered" evidence="2">
    <location>
        <begin position="1"/>
        <end position="34"/>
    </location>
</feature>
<feature type="region of interest" description="Disordered" evidence="2">
    <location>
        <begin position="229"/>
        <end position="249"/>
    </location>
</feature>
<feature type="compositionally biased region" description="Basic and acidic residues" evidence="2">
    <location>
        <begin position="1"/>
        <end position="13"/>
    </location>
</feature>
<feature type="compositionally biased region" description="Low complexity" evidence="2">
    <location>
        <begin position="18"/>
        <end position="33"/>
    </location>
</feature>
<feature type="compositionally biased region" description="Polar residues" evidence="2">
    <location>
        <begin position="238"/>
        <end position="249"/>
    </location>
</feature>
<feature type="binding site" evidence="1">
    <location>
        <begin position="37"/>
        <end position="44"/>
    </location>
    <ligand>
        <name>GTP</name>
        <dbReference type="ChEBI" id="CHEBI:37565"/>
    </ligand>
</feature>
<keyword id="KW-0143">Chaperone</keyword>
<keyword id="KW-0963">Cytoplasm</keyword>
<keyword id="KW-0342">GTP-binding</keyword>
<keyword id="KW-0996">Nickel insertion</keyword>
<keyword id="KW-0547">Nucleotide-binding</keyword>
<keyword id="KW-1185">Reference proteome</keyword>
<gene>
    <name evidence="1" type="primary">ureG</name>
    <name type="ordered locus">Francci3_2663</name>
</gene>
<reference key="1">
    <citation type="journal article" date="2007" name="Genome Res.">
        <title>Genome characteristics of facultatively symbiotic Frankia sp. strains reflect host range and host plant biogeography.</title>
        <authorList>
            <person name="Normand P."/>
            <person name="Lapierre P."/>
            <person name="Tisa L.S."/>
            <person name="Gogarten J.P."/>
            <person name="Alloisio N."/>
            <person name="Bagnarol E."/>
            <person name="Bassi C.A."/>
            <person name="Berry A.M."/>
            <person name="Bickhart D.M."/>
            <person name="Choisne N."/>
            <person name="Couloux A."/>
            <person name="Cournoyer B."/>
            <person name="Cruveiller S."/>
            <person name="Daubin V."/>
            <person name="Demange N."/>
            <person name="Francino M.P."/>
            <person name="Goltsman E."/>
            <person name="Huang Y."/>
            <person name="Kopp O.R."/>
            <person name="Labarre L."/>
            <person name="Lapidus A."/>
            <person name="Lavire C."/>
            <person name="Marechal J."/>
            <person name="Martinez M."/>
            <person name="Mastronunzio J.E."/>
            <person name="Mullin B.C."/>
            <person name="Niemann J."/>
            <person name="Pujic P."/>
            <person name="Rawnsley T."/>
            <person name="Rouy Z."/>
            <person name="Schenowitz C."/>
            <person name="Sellstedt A."/>
            <person name="Tavares F."/>
            <person name="Tomkins J.P."/>
            <person name="Vallenet D."/>
            <person name="Valverde C."/>
            <person name="Wall L.G."/>
            <person name="Wang Y."/>
            <person name="Medigue C."/>
            <person name="Benson D.R."/>
        </authorList>
    </citation>
    <scope>NUCLEOTIDE SEQUENCE [LARGE SCALE GENOMIC DNA]</scope>
    <source>
        <strain>DSM 45818 / CECT 9043 / HFP020203 / CcI3</strain>
    </source>
</reference>
<organism>
    <name type="scientific">Frankia casuarinae (strain DSM 45818 / CECT 9043 / HFP020203 / CcI3)</name>
    <dbReference type="NCBI Taxonomy" id="106370"/>
    <lineage>
        <taxon>Bacteria</taxon>
        <taxon>Bacillati</taxon>
        <taxon>Actinomycetota</taxon>
        <taxon>Actinomycetes</taxon>
        <taxon>Frankiales</taxon>
        <taxon>Frankiaceae</taxon>
        <taxon>Frankia</taxon>
    </lineage>
</organism>
<proteinExistence type="inferred from homology"/>
<comment type="function">
    <text evidence="1">Facilitates the functional incorporation of the urease nickel metallocenter. This process requires GTP hydrolysis, probably effectuated by UreG.</text>
</comment>
<comment type="subunit">
    <text evidence="1">Homodimer. UreD, UreF and UreG form a complex that acts as a GTP-hydrolysis-dependent molecular chaperone, activating the urease apoprotein by helping to assemble the nickel containing metallocenter of UreC. The UreE protein probably delivers the nickel.</text>
</comment>
<comment type="subcellular location">
    <subcellularLocation>
        <location evidence="1">Cytoplasm</location>
    </subcellularLocation>
</comment>
<comment type="similarity">
    <text evidence="1">Belongs to the SIMIBI class G3E GTPase family. UreG subfamily.</text>
</comment>
<accession>Q2J9L7</accession>